<keyword id="KW-0963">Cytoplasm</keyword>
<keyword id="KW-0489">Methyltransferase</keyword>
<keyword id="KW-1185">Reference proteome</keyword>
<keyword id="KW-0694">RNA-binding</keyword>
<keyword id="KW-0698">rRNA processing</keyword>
<keyword id="KW-0949">S-adenosyl-L-methionine</keyword>
<keyword id="KW-0808">Transferase</keyword>
<proteinExistence type="inferred from homology"/>
<sequence>MSKHIPRKRFGQNFLQDASVIAGIVHAVNPQPDDIVIEIGPGLGAITKPLLARLKHLHVVEIDRDIIERLKAEHPADKLTIHAGDALAFDFASVSEAPLKIVGNLPYNISTPLLFHLASYGNRVTDMHFMLQKEVIERMVAEPSTADYGRLTVMLQYRFYMENILFVPPEAFWPPPKVDSAVVRMIPAPGRCGTARDEALLEKLVSQAFAQRRKTLRNNLKGLADAADLEALGIDPGLRPENLPVEDFVRLANHLHDKGARG</sequence>
<comment type="function">
    <text evidence="1">Specifically dimethylates two adjacent adenosines (A1518 and A1519) in the loop of a conserved hairpin near the 3'-end of 16S rRNA in the 30S particle. May play a critical role in biogenesis of 30S subunits.</text>
</comment>
<comment type="catalytic activity">
    <reaction evidence="1">
        <text>adenosine(1518)/adenosine(1519) in 16S rRNA + 4 S-adenosyl-L-methionine = N(6)-dimethyladenosine(1518)/N(6)-dimethyladenosine(1519) in 16S rRNA + 4 S-adenosyl-L-homocysteine + 4 H(+)</text>
        <dbReference type="Rhea" id="RHEA:19609"/>
        <dbReference type="Rhea" id="RHEA-COMP:10232"/>
        <dbReference type="Rhea" id="RHEA-COMP:10233"/>
        <dbReference type="ChEBI" id="CHEBI:15378"/>
        <dbReference type="ChEBI" id="CHEBI:57856"/>
        <dbReference type="ChEBI" id="CHEBI:59789"/>
        <dbReference type="ChEBI" id="CHEBI:74411"/>
        <dbReference type="ChEBI" id="CHEBI:74493"/>
        <dbReference type="EC" id="2.1.1.182"/>
    </reaction>
</comment>
<comment type="subcellular location">
    <subcellularLocation>
        <location evidence="1">Cytoplasm</location>
    </subcellularLocation>
</comment>
<comment type="similarity">
    <text evidence="1">Belongs to the class I-like SAM-binding methyltransferase superfamily. rRNA adenine N(6)-methyltransferase family. RsmA subfamily.</text>
</comment>
<feature type="chain" id="PRO_0000101514" description="Ribosomal RNA small subunit methyltransferase A">
    <location>
        <begin position="1"/>
        <end position="262"/>
    </location>
</feature>
<feature type="binding site" evidence="1">
    <location>
        <position position="13"/>
    </location>
    <ligand>
        <name>S-adenosyl-L-methionine</name>
        <dbReference type="ChEBI" id="CHEBI:59789"/>
    </ligand>
</feature>
<feature type="binding site" evidence="1">
    <location>
        <position position="15"/>
    </location>
    <ligand>
        <name>S-adenosyl-L-methionine</name>
        <dbReference type="ChEBI" id="CHEBI:59789"/>
    </ligand>
</feature>
<feature type="binding site" evidence="1">
    <location>
        <position position="40"/>
    </location>
    <ligand>
        <name>S-adenosyl-L-methionine</name>
        <dbReference type="ChEBI" id="CHEBI:59789"/>
    </ligand>
</feature>
<feature type="binding site" evidence="1">
    <location>
        <position position="61"/>
    </location>
    <ligand>
        <name>S-adenosyl-L-methionine</name>
        <dbReference type="ChEBI" id="CHEBI:59789"/>
    </ligand>
</feature>
<feature type="binding site" evidence="1">
    <location>
        <position position="85"/>
    </location>
    <ligand>
        <name>S-adenosyl-L-methionine</name>
        <dbReference type="ChEBI" id="CHEBI:59789"/>
    </ligand>
</feature>
<feature type="binding site" evidence="1">
    <location>
        <position position="104"/>
    </location>
    <ligand>
        <name>S-adenosyl-L-methionine</name>
        <dbReference type="ChEBI" id="CHEBI:59789"/>
    </ligand>
</feature>
<reference key="1">
    <citation type="journal article" date="2003" name="Proc. Natl. Acad. Sci. U.S.A.">
        <title>The complete genome sequence of Chromobacterium violaceum reveals remarkable and exploitable bacterial adaptability.</title>
        <authorList>
            <person name="Vasconcelos A.T.R."/>
            <person name="de Almeida D.F."/>
            <person name="Hungria M."/>
            <person name="Guimaraes C.T."/>
            <person name="Antonio R.V."/>
            <person name="Almeida F.C."/>
            <person name="de Almeida L.G.P."/>
            <person name="de Almeida R."/>
            <person name="Alves-Gomes J.A."/>
            <person name="Andrade E.M."/>
            <person name="Araripe J."/>
            <person name="de Araujo M.F.F."/>
            <person name="Astolfi-Filho S."/>
            <person name="Azevedo V."/>
            <person name="Baptista A.J."/>
            <person name="Bataus L.A.M."/>
            <person name="Batista J.S."/>
            <person name="Belo A."/>
            <person name="van den Berg C."/>
            <person name="Bogo M."/>
            <person name="Bonatto S."/>
            <person name="Bordignon J."/>
            <person name="Brigido M.M."/>
            <person name="Brito C.A."/>
            <person name="Brocchi M."/>
            <person name="Burity H.A."/>
            <person name="Camargo A.A."/>
            <person name="Cardoso D.D.P."/>
            <person name="Carneiro N.P."/>
            <person name="Carraro D.M."/>
            <person name="Carvalho C.M.B."/>
            <person name="Cascardo J.C.M."/>
            <person name="Cavada B.S."/>
            <person name="Chueire L.M.O."/>
            <person name="Creczynski-Pasa T.B."/>
            <person name="Cunha-Junior N.C."/>
            <person name="Fagundes N."/>
            <person name="Falcao C.L."/>
            <person name="Fantinatti F."/>
            <person name="Farias I.P."/>
            <person name="Felipe M.S.S."/>
            <person name="Ferrari L.P."/>
            <person name="Ferro J.A."/>
            <person name="Ferro M.I.T."/>
            <person name="Franco G.R."/>
            <person name="Freitas N.S.A."/>
            <person name="Furlan L.R."/>
            <person name="Gazzinelli R.T."/>
            <person name="Gomes E.A."/>
            <person name="Goncalves P.R."/>
            <person name="Grangeiro T.B."/>
            <person name="Grattapaglia D."/>
            <person name="Grisard E.C."/>
            <person name="Hanna E.S."/>
            <person name="Jardim S.N."/>
            <person name="Laurino J."/>
            <person name="Leoi L.C.T."/>
            <person name="Lima L.F.A."/>
            <person name="Loureiro M.F."/>
            <person name="Lyra M.C.C.P."/>
            <person name="Madeira H.M.F."/>
            <person name="Manfio G.P."/>
            <person name="Maranhao A.Q."/>
            <person name="Martins W.S."/>
            <person name="di Mauro S.M.Z."/>
            <person name="de Medeiros S.R.B."/>
            <person name="Meissner R.V."/>
            <person name="Moreira M.A.M."/>
            <person name="Nascimento F.F."/>
            <person name="Nicolas M.F."/>
            <person name="Oliveira J.G."/>
            <person name="Oliveira S.C."/>
            <person name="Paixao R.F.C."/>
            <person name="Parente J.A."/>
            <person name="Pedrosa F.O."/>
            <person name="Pena S.D.J."/>
            <person name="Pereira J.O."/>
            <person name="Pereira M."/>
            <person name="Pinto L.S.R.C."/>
            <person name="Pinto L.S."/>
            <person name="Porto J.I.R."/>
            <person name="Potrich D.P."/>
            <person name="Ramalho-Neto C.E."/>
            <person name="Reis A.M.M."/>
            <person name="Rigo L.U."/>
            <person name="Rondinelli E."/>
            <person name="Santos E.B.P."/>
            <person name="Santos F.R."/>
            <person name="Schneider M.P.C."/>
            <person name="Seuanez H.N."/>
            <person name="Silva A.M.R."/>
            <person name="da Silva A.L.C."/>
            <person name="Silva D.W."/>
            <person name="Silva R."/>
            <person name="Simoes I.C."/>
            <person name="Simon D."/>
            <person name="Soares C.M.A."/>
            <person name="Soares R.B.A."/>
            <person name="Souza E.M."/>
            <person name="Souza K.R.L."/>
            <person name="Souza R.C."/>
            <person name="Steffens M.B.R."/>
            <person name="Steindel M."/>
            <person name="Teixeira S.R."/>
            <person name="Urmenyi T."/>
            <person name="Vettore A."/>
            <person name="Wassem R."/>
            <person name="Zaha A."/>
            <person name="Simpson A.J.G."/>
        </authorList>
    </citation>
    <scope>NUCLEOTIDE SEQUENCE [LARGE SCALE GENOMIC DNA]</scope>
    <source>
        <strain>ATCC 12472 / DSM 30191 / JCM 1249 / CCUG 213 / NBRC 12614 / NCIMB 9131 / NCTC 9757 / MK</strain>
    </source>
</reference>
<protein>
    <recommendedName>
        <fullName evidence="1">Ribosomal RNA small subunit methyltransferase A</fullName>
        <ecNumber evidence="1">2.1.1.182</ecNumber>
    </recommendedName>
    <alternativeName>
        <fullName evidence="1">16S rRNA (adenine(1518)-N(6)/adenine(1519)-N(6))-dimethyltransferase</fullName>
    </alternativeName>
    <alternativeName>
        <fullName evidence="1">16S rRNA dimethyladenosine transferase</fullName>
    </alternativeName>
    <alternativeName>
        <fullName evidence="1">16S rRNA dimethylase</fullName>
    </alternativeName>
    <alternativeName>
        <fullName evidence="1">S-adenosylmethionine-6-N', N'-adenosyl(rRNA) dimethyltransferase</fullName>
    </alternativeName>
</protein>
<dbReference type="EC" id="2.1.1.182" evidence="1"/>
<dbReference type="EMBL" id="AE016825">
    <property type="protein sequence ID" value="AAQ57800.1"/>
    <property type="molecule type" value="Genomic_DNA"/>
</dbReference>
<dbReference type="RefSeq" id="WP_011133676.1">
    <property type="nucleotide sequence ID" value="NC_005085.1"/>
</dbReference>
<dbReference type="SMR" id="Q7P1U1"/>
<dbReference type="STRING" id="243365.CV_0121"/>
<dbReference type="KEGG" id="cvi:CV_0121"/>
<dbReference type="eggNOG" id="COG0030">
    <property type="taxonomic scope" value="Bacteria"/>
</dbReference>
<dbReference type="HOGENOM" id="CLU_041220_0_1_4"/>
<dbReference type="OrthoDB" id="9814755at2"/>
<dbReference type="Proteomes" id="UP000001424">
    <property type="component" value="Chromosome"/>
</dbReference>
<dbReference type="GO" id="GO:0005829">
    <property type="term" value="C:cytosol"/>
    <property type="evidence" value="ECO:0007669"/>
    <property type="project" value="TreeGrafter"/>
</dbReference>
<dbReference type="GO" id="GO:0052908">
    <property type="term" value="F:16S rRNA (adenine(1518)-N(6)/adenine(1519)-N(6))-dimethyltransferase activity"/>
    <property type="evidence" value="ECO:0007669"/>
    <property type="project" value="UniProtKB-EC"/>
</dbReference>
<dbReference type="GO" id="GO:0003723">
    <property type="term" value="F:RNA binding"/>
    <property type="evidence" value="ECO:0007669"/>
    <property type="project" value="UniProtKB-KW"/>
</dbReference>
<dbReference type="CDD" id="cd02440">
    <property type="entry name" value="AdoMet_MTases"/>
    <property type="match status" value="1"/>
</dbReference>
<dbReference type="FunFam" id="1.10.8.100:FF:000001">
    <property type="entry name" value="Ribosomal RNA small subunit methyltransferase A"/>
    <property type="match status" value="1"/>
</dbReference>
<dbReference type="Gene3D" id="1.10.8.100">
    <property type="entry name" value="Ribosomal RNA adenine dimethylase-like, domain 2"/>
    <property type="match status" value="1"/>
</dbReference>
<dbReference type="Gene3D" id="3.40.50.150">
    <property type="entry name" value="Vaccinia Virus protein VP39"/>
    <property type="match status" value="1"/>
</dbReference>
<dbReference type="HAMAP" id="MF_00607">
    <property type="entry name" value="16SrRNA_methyltr_A"/>
    <property type="match status" value="1"/>
</dbReference>
<dbReference type="InterPro" id="IPR001737">
    <property type="entry name" value="KsgA/Erm"/>
</dbReference>
<dbReference type="InterPro" id="IPR023165">
    <property type="entry name" value="rRNA_Ade_diMease-like_C"/>
</dbReference>
<dbReference type="InterPro" id="IPR020596">
    <property type="entry name" value="rRNA_Ade_Mease_Trfase_CS"/>
</dbReference>
<dbReference type="InterPro" id="IPR020598">
    <property type="entry name" value="rRNA_Ade_methylase_Trfase_N"/>
</dbReference>
<dbReference type="InterPro" id="IPR011530">
    <property type="entry name" value="rRNA_adenine_dimethylase"/>
</dbReference>
<dbReference type="InterPro" id="IPR029063">
    <property type="entry name" value="SAM-dependent_MTases_sf"/>
</dbReference>
<dbReference type="NCBIfam" id="TIGR00755">
    <property type="entry name" value="ksgA"/>
    <property type="match status" value="1"/>
</dbReference>
<dbReference type="PANTHER" id="PTHR11727">
    <property type="entry name" value="DIMETHYLADENOSINE TRANSFERASE"/>
    <property type="match status" value="1"/>
</dbReference>
<dbReference type="PANTHER" id="PTHR11727:SF7">
    <property type="entry name" value="DIMETHYLADENOSINE TRANSFERASE-RELATED"/>
    <property type="match status" value="1"/>
</dbReference>
<dbReference type="Pfam" id="PF00398">
    <property type="entry name" value="RrnaAD"/>
    <property type="match status" value="1"/>
</dbReference>
<dbReference type="SMART" id="SM00650">
    <property type="entry name" value="rADc"/>
    <property type="match status" value="1"/>
</dbReference>
<dbReference type="SUPFAM" id="SSF53335">
    <property type="entry name" value="S-adenosyl-L-methionine-dependent methyltransferases"/>
    <property type="match status" value="1"/>
</dbReference>
<dbReference type="PROSITE" id="PS01131">
    <property type="entry name" value="RRNA_A_DIMETH"/>
    <property type="match status" value="1"/>
</dbReference>
<dbReference type="PROSITE" id="PS51689">
    <property type="entry name" value="SAM_RNA_A_N6_MT"/>
    <property type="match status" value="1"/>
</dbReference>
<evidence type="ECO:0000255" key="1">
    <source>
        <dbReference type="HAMAP-Rule" id="MF_00607"/>
    </source>
</evidence>
<name>RSMA_CHRVO</name>
<organism>
    <name type="scientific">Chromobacterium violaceum (strain ATCC 12472 / DSM 30191 / JCM 1249 / CCUG 213 / NBRC 12614 / NCIMB 9131 / NCTC 9757 / MK)</name>
    <dbReference type="NCBI Taxonomy" id="243365"/>
    <lineage>
        <taxon>Bacteria</taxon>
        <taxon>Pseudomonadati</taxon>
        <taxon>Pseudomonadota</taxon>
        <taxon>Betaproteobacteria</taxon>
        <taxon>Neisseriales</taxon>
        <taxon>Chromobacteriaceae</taxon>
        <taxon>Chromobacterium</taxon>
    </lineage>
</organism>
<gene>
    <name evidence="1" type="primary">rsmA</name>
    <name evidence="1" type="synonym">ksgA</name>
    <name type="ordered locus">CV_0121</name>
</gene>
<accession>Q7P1U1</accession>